<comment type="function">
    <text evidence="5">Olfactory receptor for medium length odd-chained diamines including cadaverine which is generated by bacterial decarboxylation of the basic amino acid lysine and contributes to the odor of decomposing tissue. Mediates pronounced innate aversion behavior to cadaverine.</text>
</comment>
<comment type="subcellular location">
    <subcellularLocation>
        <location evidence="1">Cell membrane</location>
        <topology evidence="1">Multi-pass membrane protein</topology>
    </subcellularLocation>
</comment>
<comment type="tissue specificity">
    <text evidence="5">Expressed in olfactory epithelium (at protein level). Detected in a sparse population of olfactory sensory neurons.</text>
</comment>
<comment type="similarity">
    <text evidence="4">Belongs to the G-protein coupled receptor 1 family.</text>
</comment>
<gene>
    <name evidence="7" type="primary">taar13c</name>
</gene>
<organism>
    <name type="scientific">Danio rerio</name>
    <name type="common">Zebrafish</name>
    <name type="synonym">Brachydanio rerio</name>
    <dbReference type="NCBI Taxonomy" id="7955"/>
    <lineage>
        <taxon>Eukaryota</taxon>
        <taxon>Metazoa</taxon>
        <taxon>Chordata</taxon>
        <taxon>Craniata</taxon>
        <taxon>Vertebrata</taxon>
        <taxon>Euteleostomi</taxon>
        <taxon>Actinopterygii</taxon>
        <taxon>Neopterygii</taxon>
        <taxon>Teleostei</taxon>
        <taxon>Ostariophysi</taxon>
        <taxon>Cypriniformes</taxon>
        <taxon>Danionidae</taxon>
        <taxon>Danioninae</taxon>
        <taxon>Danio</taxon>
    </lineage>
</organism>
<accession>Q5QNP2</accession>
<dbReference type="EMBL" id="AL929507">
    <property type="status" value="NOT_ANNOTATED_CDS"/>
    <property type="molecule type" value="Genomic_DNA"/>
</dbReference>
<dbReference type="RefSeq" id="NP_001076509.1">
    <property type="nucleotide sequence ID" value="NM_001083040.1"/>
</dbReference>
<dbReference type="SMR" id="Q5QNP2"/>
<dbReference type="FunCoup" id="Q5QNP2">
    <property type="interactions" value="4"/>
</dbReference>
<dbReference type="STRING" id="7955.ENSDARP00000091296"/>
<dbReference type="GlyCosmos" id="Q5QNP2">
    <property type="glycosylation" value="2 sites, No reported glycans"/>
</dbReference>
<dbReference type="PaxDb" id="7955-ENSDARP00000091296"/>
<dbReference type="Ensembl" id="ENSDART00000100523">
    <property type="protein sequence ID" value="ENSDARP00000091296"/>
    <property type="gene ID" value="ENSDARG00000112794"/>
</dbReference>
<dbReference type="Ensembl" id="ENSDART00000185587">
    <property type="protein sequence ID" value="ENSDARP00000154267"/>
    <property type="gene ID" value="ENSDARG00000112626"/>
</dbReference>
<dbReference type="Ensembl" id="ENSDART00000187307">
    <property type="protein sequence ID" value="ENSDARP00000153417"/>
    <property type="gene ID" value="ENSDARG00000116335"/>
</dbReference>
<dbReference type="GeneID" id="100034378"/>
<dbReference type="KEGG" id="dre:100034378"/>
<dbReference type="AGR" id="ZFIN:ZDB-GENE-041014-60"/>
<dbReference type="CTD" id="100034378"/>
<dbReference type="ZFIN" id="ZDB-GENE-041014-60">
    <property type="gene designation" value="taar13c"/>
</dbReference>
<dbReference type="eggNOG" id="KOG3656">
    <property type="taxonomic scope" value="Eukaryota"/>
</dbReference>
<dbReference type="HOGENOM" id="CLU_009579_11_0_1"/>
<dbReference type="InParanoid" id="Q5QNP2"/>
<dbReference type="OMA" id="NHHENES"/>
<dbReference type="OrthoDB" id="5959645at2759"/>
<dbReference type="PhylomeDB" id="Q5QNP2"/>
<dbReference type="TreeFam" id="TF343107"/>
<dbReference type="Reactome" id="R-DRE-375280">
    <property type="pathway name" value="Amine ligand-binding receptors"/>
</dbReference>
<dbReference type="PRO" id="PR:Q5QNP2"/>
<dbReference type="Proteomes" id="UP000000437">
    <property type="component" value="Alternate scaffold 20"/>
</dbReference>
<dbReference type="Proteomes" id="UP000000437">
    <property type="component" value="Chromosome 20"/>
</dbReference>
<dbReference type="Bgee" id="ENSDARG00000116335">
    <property type="expression patterns" value="Expressed in olfactory epithelium"/>
</dbReference>
<dbReference type="GO" id="GO:0016020">
    <property type="term" value="C:membrane"/>
    <property type="evidence" value="ECO:0000314"/>
    <property type="project" value="ZFIN"/>
</dbReference>
<dbReference type="GO" id="GO:0005886">
    <property type="term" value="C:plasma membrane"/>
    <property type="evidence" value="ECO:0000318"/>
    <property type="project" value="GO_Central"/>
</dbReference>
<dbReference type="GO" id="GO:0008227">
    <property type="term" value="F:G protein-coupled amine receptor activity"/>
    <property type="evidence" value="ECO:0000314"/>
    <property type="project" value="UniProtKB"/>
</dbReference>
<dbReference type="GO" id="GO:0004984">
    <property type="term" value="F:olfactory receptor activity"/>
    <property type="evidence" value="ECO:0000314"/>
    <property type="project" value="ZFIN"/>
</dbReference>
<dbReference type="GO" id="GO:0019808">
    <property type="term" value="F:polyamine binding"/>
    <property type="evidence" value="ECO:0000314"/>
    <property type="project" value="ZFIN"/>
</dbReference>
<dbReference type="GO" id="GO:0019810">
    <property type="term" value="F:putrescine binding"/>
    <property type="evidence" value="ECO:0000314"/>
    <property type="project" value="ZFIN"/>
</dbReference>
<dbReference type="GO" id="GO:0001594">
    <property type="term" value="F:trace-amine receptor activity"/>
    <property type="evidence" value="ECO:0000318"/>
    <property type="project" value="GO_Central"/>
</dbReference>
<dbReference type="GO" id="GO:0050911">
    <property type="term" value="P:detection of chemical stimulus involved in sensory perception of smell"/>
    <property type="evidence" value="ECO:0000270"/>
    <property type="project" value="ZFIN"/>
</dbReference>
<dbReference type="GO" id="GO:0007186">
    <property type="term" value="P:G protein-coupled receptor signaling pathway"/>
    <property type="evidence" value="ECO:0000318"/>
    <property type="project" value="GO_Central"/>
</dbReference>
<dbReference type="GO" id="GO:1990834">
    <property type="term" value="P:response to odorant"/>
    <property type="evidence" value="ECO:0000314"/>
    <property type="project" value="ZFIN"/>
</dbReference>
<dbReference type="GO" id="GO:0007606">
    <property type="term" value="P:sensory perception of chemical stimulus"/>
    <property type="evidence" value="ECO:0000314"/>
    <property type="project" value="UniProtKB"/>
</dbReference>
<dbReference type="GO" id="GO:0009995">
    <property type="term" value="P:soluble molecule recognition"/>
    <property type="evidence" value="ECO:0000314"/>
    <property type="project" value="ZFIN"/>
</dbReference>
<dbReference type="CDD" id="cd15055">
    <property type="entry name" value="7tmA_TAARs"/>
    <property type="match status" value="1"/>
</dbReference>
<dbReference type="FunFam" id="1.20.1070.10:FF:000030">
    <property type="entry name" value="trace amine-associated receptor 1"/>
    <property type="match status" value="1"/>
</dbReference>
<dbReference type="Gene3D" id="1.20.1070.10">
    <property type="entry name" value="Rhodopsin 7-helix transmembrane proteins"/>
    <property type="match status" value="1"/>
</dbReference>
<dbReference type="InterPro" id="IPR000276">
    <property type="entry name" value="GPCR_Rhodpsn"/>
</dbReference>
<dbReference type="InterPro" id="IPR017452">
    <property type="entry name" value="GPCR_Rhodpsn_7TM"/>
</dbReference>
<dbReference type="InterPro" id="IPR050569">
    <property type="entry name" value="TAAR"/>
</dbReference>
<dbReference type="InterPro" id="IPR009132">
    <property type="entry name" value="TAAR_fam"/>
</dbReference>
<dbReference type="PANTHER" id="PTHR24249">
    <property type="entry name" value="HISTAMINE RECEPTOR-RELATED G-PROTEIN COUPLED RECEPTOR"/>
    <property type="match status" value="1"/>
</dbReference>
<dbReference type="PANTHER" id="PTHR24249:SF307">
    <property type="entry name" value="TRACE AMINE-ASSOCIATED RECEPTOR 5"/>
    <property type="match status" value="1"/>
</dbReference>
<dbReference type="Pfam" id="PF00001">
    <property type="entry name" value="7tm_1"/>
    <property type="match status" value="1"/>
</dbReference>
<dbReference type="PRINTS" id="PR00237">
    <property type="entry name" value="GPCRRHODOPSN"/>
</dbReference>
<dbReference type="PRINTS" id="PR01830">
    <property type="entry name" value="TRACEAMINER"/>
</dbReference>
<dbReference type="SMART" id="SM01381">
    <property type="entry name" value="7TM_GPCR_Srsx"/>
    <property type="match status" value="1"/>
</dbReference>
<dbReference type="SUPFAM" id="SSF81321">
    <property type="entry name" value="Family A G protein-coupled receptor-like"/>
    <property type="match status" value="1"/>
</dbReference>
<dbReference type="PROSITE" id="PS00237">
    <property type="entry name" value="G_PROTEIN_RECEP_F1_1"/>
    <property type="match status" value="1"/>
</dbReference>
<dbReference type="PROSITE" id="PS50262">
    <property type="entry name" value="G_PROTEIN_RECEP_F1_2"/>
    <property type="match status" value="1"/>
</dbReference>
<reference key="1">
    <citation type="journal article" date="2013" name="Nature">
        <title>The zebrafish reference genome sequence and its relationship to the human genome.</title>
        <authorList>
            <person name="Howe K."/>
            <person name="Clark M.D."/>
            <person name="Torroja C.F."/>
            <person name="Torrance J."/>
            <person name="Berthelot C."/>
            <person name="Muffato M."/>
            <person name="Collins J.E."/>
            <person name="Humphray S."/>
            <person name="McLaren K."/>
            <person name="Matthews L."/>
            <person name="McLaren S."/>
            <person name="Sealy I."/>
            <person name="Caccamo M."/>
            <person name="Churcher C."/>
            <person name="Scott C."/>
            <person name="Barrett J.C."/>
            <person name="Koch R."/>
            <person name="Rauch G.J."/>
            <person name="White S."/>
            <person name="Chow W."/>
            <person name="Kilian B."/>
            <person name="Quintais L.T."/>
            <person name="Guerra-Assuncao J.A."/>
            <person name="Zhou Y."/>
            <person name="Gu Y."/>
            <person name="Yen J."/>
            <person name="Vogel J.H."/>
            <person name="Eyre T."/>
            <person name="Redmond S."/>
            <person name="Banerjee R."/>
            <person name="Chi J."/>
            <person name="Fu B."/>
            <person name="Langley E."/>
            <person name="Maguire S.F."/>
            <person name="Laird G.K."/>
            <person name="Lloyd D."/>
            <person name="Kenyon E."/>
            <person name="Donaldson S."/>
            <person name="Sehra H."/>
            <person name="Almeida-King J."/>
            <person name="Loveland J."/>
            <person name="Trevanion S."/>
            <person name="Jones M."/>
            <person name="Quail M."/>
            <person name="Willey D."/>
            <person name="Hunt A."/>
            <person name="Burton J."/>
            <person name="Sims S."/>
            <person name="McLay K."/>
            <person name="Plumb B."/>
            <person name="Davis J."/>
            <person name="Clee C."/>
            <person name="Oliver K."/>
            <person name="Clark R."/>
            <person name="Riddle C."/>
            <person name="Elliot D."/>
            <person name="Threadgold G."/>
            <person name="Harden G."/>
            <person name="Ware D."/>
            <person name="Begum S."/>
            <person name="Mortimore B."/>
            <person name="Kerry G."/>
            <person name="Heath P."/>
            <person name="Phillimore B."/>
            <person name="Tracey A."/>
            <person name="Corby N."/>
            <person name="Dunn M."/>
            <person name="Johnson C."/>
            <person name="Wood J."/>
            <person name="Clark S."/>
            <person name="Pelan S."/>
            <person name="Griffiths G."/>
            <person name="Smith M."/>
            <person name="Glithero R."/>
            <person name="Howden P."/>
            <person name="Barker N."/>
            <person name="Lloyd C."/>
            <person name="Stevens C."/>
            <person name="Harley J."/>
            <person name="Holt K."/>
            <person name="Panagiotidis G."/>
            <person name="Lovell J."/>
            <person name="Beasley H."/>
            <person name="Henderson C."/>
            <person name="Gordon D."/>
            <person name="Auger K."/>
            <person name="Wright D."/>
            <person name="Collins J."/>
            <person name="Raisen C."/>
            <person name="Dyer L."/>
            <person name="Leung K."/>
            <person name="Robertson L."/>
            <person name="Ambridge K."/>
            <person name="Leongamornlert D."/>
            <person name="McGuire S."/>
            <person name="Gilderthorp R."/>
            <person name="Griffiths C."/>
            <person name="Manthravadi D."/>
            <person name="Nichol S."/>
            <person name="Barker G."/>
            <person name="Whitehead S."/>
            <person name="Kay M."/>
            <person name="Brown J."/>
            <person name="Murnane C."/>
            <person name="Gray E."/>
            <person name="Humphries M."/>
            <person name="Sycamore N."/>
            <person name="Barker D."/>
            <person name="Saunders D."/>
            <person name="Wallis J."/>
            <person name="Babbage A."/>
            <person name="Hammond S."/>
            <person name="Mashreghi-Mohammadi M."/>
            <person name="Barr L."/>
            <person name="Martin S."/>
            <person name="Wray P."/>
            <person name="Ellington A."/>
            <person name="Matthews N."/>
            <person name="Ellwood M."/>
            <person name="Woodmansey R."/>
            <person name="Clark G."/>
            <person name="Cooper J."/>
            <person name="Tromans A."/>
            <person name="Grafham D."/>
            <person name="Skuce C."/>
            <person name="Pandian R."/>
            <person name="Andrews R."/>
            <person name="Harrison E."/>
            <person name="Kimberley A."/>
            <person name="Garnett J."/>
            <person name="Fosker N."/>
            <person name="Hall R."/>
            <person name="Garner P."/>
            <person name="Kelly D."/>
            <person name="Bird C."/>
            <person name="Palmer S."/>
            <person name="Gehring I."/>
            <person name="Berger A."/>
            <person name="Dooley C.M."/>
            <person name="Ersan-Urun Z."/>
            <person name="Eser C."/>
            <person name="Geiger H."/>
            <person name="Geisler M."/>
            <person name="Karotki L."/>
            <person name="Kirn A."/>
            <person name="Konantz J."/>
            <person name="Konantz M."/>
            <person name="Oberlander M."/>
            <person name="Rudolph-Geiger S."/>
            <person name="Teucke M."/>
            <person name="Lanz C."/>
            <person name="Raddatz G."/>
            <person name="Osoegawa K."/>
            <person name="Zhu B."/>
            <person name="Rapp A."/>
            <person name="Widaa S."/>
            <person name="Langford C."/>
            <person name="Yang F."/>
            <person name="Schuster S.C."/>
            <person name="Carter N.P."/>
            <person name="Harrow J."/>
            <person name="Ning Z."/>
            <person name="Herrero J."/>
            <person name="Searle S.M."/>
            <person name="Enright A."/>
            <person name="Geisler R."/>
            <person name="Plasterk R.H."/>
            <person name="Lee C."/>
            <person name="Westerfield M."/>
            <person name="de Jong P.J."/>
            <person name="Zon L.I."/>
            <person name="Postlethwait J.H."/>
            <person name="Nusslein-Volhard C."/>
            <person name="Hubbard T.J."/>
            <person name="Roest Crollius H."/>
            <person name="Rogers J."/>
            <person name="Stemple D.L."/>
        </authorList>
    </citation>
    <scope>NUCLEOTIDE SEQUENCE [LARGE SCALE GENOMIC DNA]</scope>
    <source>
        <strain>Tuebingen</strain>
    </source>
</reference>
<reference evidence="6" key="2">
    <citation type="journal article" date="2013" name="Proc. Natl. Acad. Sci. U.S.A.">
        <title>High-affinity olfactory receptor for the death-associated odor cadaverine.</title>
        <authorList>
            <person name="Hussain A."/>
            <person name="Saraiva L.R."/>
            <person name="Ferrero D.M."/>
            <person name="Ahuja G."/>
            <person name="Krishna V.S."/>
            <person name="Liberles S.D."/>
            <person name="Korsching S.I."/>
        </authorList>
    </citation>
    <scope>FUNCTION</scope>
    <scope>TISSUE SPECIFICITY</scope>
</reference>
<evidence type="ECO:0000250" key="1">
    <source>
        <dbReference type="UniProtKB" id="O14804"/>
    </source>
</evidence>
<evidence type="ECO:0000250" key="2">
    <source>
        <dbReference type="UniProtKB" id="Q5QD04"/>
    </source>
</evidence>
<evidence type="ECO:0000255" key="3"/>
<evidence type="ECO:0000255" key="4">
    <source>
        <dbReference type="PROSITE-ProRule" id="PRU00521"/>
    </source>
</evidence>
<evidence type="ECO:0000269" key="5">
    <source>
    </source>
</evidence>
<evidence type="ECO:0000305" key="6"/>
<evidence type="ECO:0000312" key="7">
    <source>
        <dbReference type="ZFIN" id="ZDB-GENE-041014-60"/>
    </source>
</evidence>
<sequence length="341" mass="38441">MDLSSQEYDPSQFCFPAVNNSCLKGTHHVSTQTVVYLILASAMTVTVLGNSVVIISIAHFKQLQTPTNILVMSLALADLLLGLVVMPFSMIRSVDGCWYYGETFCLLHTGFDLFLTSVSIFHLIFIAVDRHQAVCFPLQYPTRITIPVAWVMVMISWSMAAFYSYGVVYSKANLEGLEEYIASVYCMGGCTLYFNALWSVLDTLLTFFLPCSVMVGLYARIFVVAKKHIKSITEANQNENENVFKNPRRSERKAAKTLGIVVGAFILCWLPFFINSLVDPYINFSTPYALFDAFGWLGYTNSTLNPIIYGLFYPWFRKTLSLIVTLRIFEPNSSDINLFTV</sequence>
<feature type="chain" id="PRO_0000425538" description="Trace amine-associated receptor 13c">
    <location>
        <begin position="1"/>
        <end position="341"/>
    </location>
</feature>
<feature type="topological domain" description="Extracellular" evidence="3">
    <location>
        <begin position="1"/>
        <end position="34"/>
    </location>
</feature>
<feature type="transmembrane region" description="Helical; Name=1" evidence="3">
    <location>
        <begin position="35"/>
        <end position="55"/>
    </location>
</feature>
<feature type="topological domain" description="Cytoplasmic" evidence="3">
    <location>
        <begin position="56"/>
        <end position="68"/>
    </location>
</feature>
<feature type="transmembrane region" description="Helical; Name=2" evidence="3">
    <location>
        <begin position="69"/>
        <end position="89"/>
    </location>
</feature>
<feature type="topological domain" description="Extracellular" evidence="3">
    <location>
        <begin position="90"/>
        <end position="105"/>
    </location>
</feature>
<feature type="transmembrane region" description="Helical; Name=3" evidence="3">
    <location>
        <begin position="106"/>
        <end position="126"/>
    </location>
</feature>
<feature type="topological domain" description="Cytoplasmic" evidence="3">
    <location>
        <begin position="127"/>
        <end position="147"/>
    </location>
</feature>
<feature type="transmembrane region" description="Helical; Name=4" evidence="3">
    <location>
        <begin position="148"/>
        <end position="168"/>
    </location>
</feature>
<feature type="topological domain" description="Extracellular" evidence="3">
    <location>
        <begin position="169"/>
        <end position="195"/>
    </location>
</feature>
<feature type="transmembrane region" description="Helical; Name=5" evidence="3">
    <location>
        <begin position="196"/>
        <end position="219"/>
    </location>
</feature>
<feature type="topological domain" description="Cytoplasmic" evidence="3">
    <location>
        <begin position="220"/>
        <end position="257"/>
    </location>
</feature>
<feature type="transmembrane region" description="Helical; Name=6" evidence="3">
    <location>
        <begin position="258"/>
        <end position="278"/>
    </location>
</feature>
<feature type="topological domain" description="Extracellular" evidence="3">
    <location>
        <begin position="279"/>
        <end position="292"/>
    </location>
</feature>
<feature type="transmembrane region" description="Helical; Name=7" evidence="3">
    <location>
        <begin position="293"/>
        <end position="313"/>
    </location>
</feature>
<feature type="topological domain" description="Cytoplasmic" evidence="3">
    <location>
        <begin position="314"/>
        <end position="341"/>
    </location>
</feature>
<feature type="glycosylation site" description="N-linked (GlcNAc...) asparagine" evidence="3">
    <location>
        <position position="19"/>
    </location>
</feature>
<feature type="glycosylation site" description="N-linked (GlcNAc...) asparagine" evidence="3">
    <location>
        <position position="283"/>
    </location>
</feature>
<feature type="disulfide bond" evidence="2">
    <location>
        <begin position="22"/>
        <end position="186"/>
    </location>
</feature>
<feature type="disulfide bond" evidence="4">
    <location>
        <begin position="105"/>
        <end position="186"/>
    </location>
</feature>
<name>TA13C_DANRE</name>
<proteinExistence type="evidence at protein level"/>
<keyword id="KW-0085">Behavior</keyword>
<keyword id="KW-1003">Cell membrane</keyword>
<keyword id="KW-1015">Disulfide bond</keyword>
<keyword id="KW-0297">G-protein coupled receptor</keyword>
<keyword id="KW-0325">Glycoprotein</keyword>
<keyword id="KW-0472">Membrane</keyword>
<keyword id="KW-0552">Olfaction</keyword>
<keyword id="KW-0675">Receptor</keyword>
<keyword id="KW-1185">Reference proteome</keyword>
<keyword id="KW-0716">Sensory transduction</keyword>
<keyword id="KW-0807">Transducer</keyword>
<keyword id="KW-0812">Transmembrane</keyword>
<keyword id="KW-1133">Transmembrane helix</keyword>
<protein>
    <recommendedName>
        <fullName evidence="7">Trace amine-associated receptor 13c</fullName>
    </recommendedName>
</protein>